<comment type="catalytic activity">
    <reaction evidence="1">
        <text>L-citrulline + L-aspartate + ATP = 2-(N(omega)-L-arginino)succinate + AMP + diphosphate + H(+)</text>
        <dbReference type="Rhea" id="RHEA:10932"/>
        <dbReference type="ChEBI" id="CHEBI:15378"/>
        <dbReference type="ChEBI" id="CHEBI:29991"/>
        <dbReference type="ChEBI" id="CHEBI:30616"/>
        <dbReference type="ChEBI" id="CHEBI:33019"/>
        <dbReference type="ChEBI" id="CHEBI:57472"/>
        <dbReference type="ChEBI" id="CHEBI:57743"/>
        <dbReference type="ChEBI" id="CHEBI:456215"/>
        <dbReference type="EC" id="6.3.4.5"/>
    </reaction>
</comment>
<comment type="pathway">
    <text evidence="1">Amino-acid biosynthesis; L-arginine biosynthesis; L-arginine from L-ornithine and carbamoyl phosphate: step 2/3.</text>
</comment>
<comment type="subunit">
    <text evidence="1">Homotetramer.</text>
</comment>
<comment type="subcellular location">
    <subcellularLocation>
        <location evidence="1">Cytoplasm</location>
    </subcellularLocation>
</comment>
<comment type="similarity">
    <text evidence="1">Belongs to the argininosuccinate synthase family. Type 2 subfamily.</text>
</comment>
<feature type="chain" id="PRO_1000129735" description="Argininosuccinate synthase">
    <location>
        <begin position="1"/>
        <end position="448"/>
    </location>
</feature>
<feature type="binding site" evidence="1">
    <location>
        <begin position="17"/>
        <end position="25"/>
    </location>
    <ligand>
        <name>ATP</name>
        <dbReference type="ChEBI" id="CHEBI:30616"/>
    </ligand>
</feature>
<feature type="binding site" evidence="1">
    <location>
        <position position="43"/>
    </location>
    <ligand>
        <name>ATP</name>
        <dbReference type="ChEBI" id="CHEBI:30616"/>
    </ligand>
</feature>
<feature type="binding site" evidence="1">
    <location>
        <position position="99"/>
    </location>
    <ligand>
        <name>L-citrulline</name>
        <dbReference type="ChEBI" id="CHEBI:57743"/>
    </ligand>
</feature>
<feature type="binding site" evidence="1">
    <location>
        <position position="129"/>
    </location>
    <ligand>
        <name>ATP</name>
        <dbReference type="ChEBI" id="CHEBI:30616"/>
    </ligand>
</feature>
<feature type="binding site" evidence="1">
    <location>
        <position position="131"/>
    </location>
    <ligand>
        <name>ATP</name>
        <dbReference type="ChEBI" id="CHEBI:30616"/>
    </ligand>
</feature>
<feature type="binding site" evidence="1">
    <location>
        <position position="131"/>
    </location>
    <ligand>
        <name>L-aspartate</name>
        <dbReference type="ChEBI" id="CHEBI:29991"/>
    </ligand>
</feature>
<feature type="binding site" evidence="1">
    <location>
        <position position="135"/>
    </location>
    <ligand>
        <name>L-aspartate</name>
        <dbReference type="ChEBI" id="CHEBI:29991"/>
    </ligand>
</feature>
<feature type="binding site" evidence="1">
    <location>
        <position position="135"/>
    </location>
    <ligand>
        <name>L-citrulline</name>
        <dbReference type="ChEBI" id="CHEBI:57743"/>
    </ligand>
</feature>
<feature type="binding site" evidence="1">
    <location>
        <position position="136"/>
    </location>
    <ligand>
        <name>ATP</name>
        <dbReference type="ChEBI" id="CHEBI:30616"/>
    </ligand>
</feature>
<feature type="binding site" evidence="1">
    <location>
        <position position="136"/>
    </location>
    <ligand>
        <name>L-aspartate</name>
        <dbReference type="ChEBI" id="CHEBI:29991"/>
    </ligand>
</feature>
<feature type="binding site" evidence="1">
    <location>
        <position position="139"/>
    </location>
    <ligand>
        <name>L-citrulline</name>
        <dbReference type="ChEBI" id="CHEBI:57743"/>
    </ligand>
</feature>
<feature type="binding site" evidence="1">
    <location>
        <position position="192"/>
    </location>
    <ligand>
        <name>L-citrulline</name>
        <dbReference type="ChEBI" id="CHEBI:57743"/>
    </ligand>
</feature>
<feature type="binding site" evidence="1">
    <location>
        <position position="194"/>
    </location>
    <ligand>
        <name>ATP</name>
        <dbReference type="ChEBI" id="CHEBI:30616"/>
    </ligand>
</feature>
<feature type="binding site" evidence="1">
    <location>
        <position position="201"/>
    </location>
    <ligand>
        <name>L-citrulline</name>
        <dbReference type="ChEBI" id="CHEBI:57743"/>
    </ligand>
</feature>
<feature type="binding site" evidence="1">
    <location>
        <position position="203"/>
    </location>
    <ligand>
        <name>L-citrulline</name>
        <dbReference type="ChEBI" id="CHEBI:57743"/>
    </ligand>
</feature>
<feature type="binding site" evidence="1">
    <location>
        <position position="280"/>
    </location>
    <ligand>
        <name>L-citrulline</name>
        <dbReference type="ChEBI" id="CHEBI:57743"/>
    </ligand>
</feature>
<proteinExistence type="inferred from homology"/>
<protein>
    <recommendedName>
        <fullName evidence="1">Argininosuccinate synthase</fullName>
        <ecNumber evidence="1">6.3.4.5</ecNumber>
    </recommendedName>
    <alternativeName>
        <fullName evidence="1">Citrulline--aspartate ligase</fullName>
    </alternativeName>
</protein>
<accession>A4YJX9</accession>
<keyword id="KW-0028">Amino-acid biosynthesis</keyword>
<keyword id="KW-0055">Arginine biosynthesis</keyword>
<keyword id="KW-0067">ATP-binding</keyword>
<keyword id="KW-0963">Cytoplasm</keyword>
<keyword id="KW-0436">Ligase</keyword>
<keyword id="KW-0547">Nucleotide-binding</keyword>
<keyword id="KW-1185">Reference proteome</keyword>
<sequence length="448" mass="49427">MTTILKGLPTGEKVGIAFSGGLDTSAALLWMKQKGARCFAYTANLGQPDESDYDEIPRKAMSFGAEKARLVDCRTQLVHEGIAAIQSGAFHISTGGATYFNTTPLGRAVTGTMLVAAMKEDGVNIWGDGSTYKGNDIERFYRYGLLTNPNLKIYKPWLDQQFIDELGGRAEMSAFLTAHGFNYKMSAEKAYSTDSNLLGATHEAKDLESLSSGIRIVNPIMGVPFWREDCAVRPETVVVRFEEGQPVALNGQTFTDPVALFLEANAIGGRHGLGMCDQIENRIIEAKSRGIYEAPGMALLHIAYERLVTGIHNEDTIEQYRMSGMKLGRLLYQGRWFDSQALMLRETAQRWVASAITGEVTLELRRGNDYSLLNTESPNLTYQPERLSMEKVEDAAFTPADRIGQLTMRNLDITDTRTKLKLYSDTGLLSGAEGAQIFQLGHDKGDKS</sequence>
<organism>
    <name type="scientific">Bradyrhizobium sp. (strain ORS 278)</name>
    <dbReference type="NCBI Taxonomy" id="114615"/>
    <lineage>
        <taxon>Bacteria</taxon>
        <taxon>Pseudomonadati</taxon>
        <taxon>Pseudomonadota</taxon>
        <taxon>Alphaproteobacteria</taxon>
        <taxon>Hyphomicrobiales</taxon>
        <taxon>Nitrobacteraceae</taxon>
        <taxon>Bradyrhizobium</taxon>
    </lineage>
</organism>
<gene>
    <name evidence="1" type="primary">argG</name>
    <name type="ordered locus">BRADO0243</name>
</gene>
<name>ASSY_BRASO</name>
<reference key="1">
    <citation type="journal article" date="2007" name="Science">
        <title>Legumes symbioses: absence of nod genes in photosynthetic bradyrhizobia.</title>
        <authorList>
            <person name="Giraud E."/>
            <person name="Moulin L."/>
            <person name="Vallenet D."/>
            <person name="Barbe V."/>
            <person name="Cytryn E."/>
            <person name="Avarre J.-C."/>
            <person name="Jaubert M."/>
            <person name="Simon D."/>
            <person name="Cartieaux F."/>
            <person name="Prin Y."/>
            <person name="Bena G."/>
            <person name="Hannibal L."/>
            <person name="Fardoux J."/>
            <person name="Kojadinovic M."/>
            <person name="Vuillet L."/>
            <person name="Lajus A."/>
            <person name="Cruveiller S."/>
            <person name="Rouy Z."/>
            <person name="Mangenot S."/>
            <person name="Segurens B."/>
            <person name="Dossat C."/>
            <person name="Franck W.L."/>
            <person name="Chang W.-S."/>
            <person name="Saunders E."/>
            <person name="Bruce D."/>
            <person name="Richardson P."/>
            <person name="Normand P."/>
            <person name="Dreyfus B."/>
            <person name="Pignol D."/>
            <person name="Stacey G."/>
            <person name="Emerich D."/>
            <person name="Vermeglio A."/>
            <person name="Medigue C."/>
            <person name="Sadowsky M."/>
        </authorList>
    </citation>
    <scope>NUCLEOTIDE SEQUENCE [LARGE SCALE GENOMIC DNA]</scope>
    <source>
        <strain>ORS 278</strain>
    </source>
</reference>
<evidence type="ECO:0000255" key="1">
    <source>
        <dbReference type="HAMAP-Rule" id="MF_00581"/>
    </source>
</evidence>
<dbReference type="EC" id="6.3.4.5" evidence="1"/>
<dbReference type="EMBL" id="CU234118">
    <property type="protein sequence ID" value="CAL74205.1"/>
    <property type="molecule type" value="Genomic_DNA"/>
</dbReference>
<dbReference type="RefSeq" id="WP_011923492.1">
    <property type="nucleotide sequence ID" value="NC_009445.1"/>
</dbReference>
<dbReference type="SMR" id="A4YJX9"/>
<dbReference type="STRING" id="114615.BRADO0243"/>
<dbReference type="KEGG" id="bra:BRADO0243"/>
<dbReference type="eggNOG" id="COG0137">
    <property type="taxonomic scope" value="Bacteria"/>
</dbReference>
<dbReference type="HOGENOM" id="CLU_032784_4_1_5"/>
<dbReference type="OrthoDB" id="9801641at2"/>
<dbReference type="UniPathway" id="UPA00068">
    <property type="reaction ID" value="UER00113"/>
</dbReference>
<dbReference type="Proteomes" id="UP000001994">
    <property type="component" value="Chromosome"/>
</dbReference>
<dbReference type="GO" id="GO:0005737">
    <property type="term" value="C:cytoplasm"/>
    <property type="evidence" value="ECO:0007669"/>
    <property type="project" value="UniProtKB-SubCell"/>
</dbReference>
<dbReference type="GO" id="GO:0004055">
    <property type="term" value="F:argininosuccinate synthase activity"/>
    <property type="evidence" value="ECO:0007669"/>
    <property type="project" value="UniProtKB-UniRule"/>
</dbReference>
<dbReference type="GO" id="GO:0005524">
    <property type="term" value="F:ATP binding"/>
    <property type="evidence" value="ECO:0007669"/>
    <property type="project" value="UniProtKB-UniRule"/>
</dbReference>
<dbReference type="GO" id="GO:0042803">
    <property type="term" value="F:protein homodimerization activity"/>
    <property type="evidence" value="ECO:0007669"/>
    <property type="project" value="InterPro"/>
</dbReference>
<dbReference type="GO" id="GO:0000053">
    <property type="term" value="P:argininosuccinate metabolic process"/>
    <property type="evidence" value="ECO:0007669"/>
    <property type="project" value="TreeGrafter"/>
</dbReference>
<dbReference type="GO" id="GO:0006526">
    <property type="term" value="P:L-arginine biosynthetic process"/>
    <property type="evidence" value="ECO:0007669"/>
    <property type="project" value="UniProtKB-UniRule"/>
</dbReference>
<dbReference type="GO" id="GO:0000050">
    <property type="term" value="P:urea cycle"/>
    <property type="evidence" value="ECO:0007669"/>
    <property type="project" value="TreeGrafter"/>
</dbReference>
<dbReference type="CDD" id="cd01999">
    <property type="entry name" value="ASS"/>
    <property type="match status" value="1"/>
</dbReference>
<dbReference type="FunFam" id="1.10.287.400:FF:000001">
    <property type="entry name" value="Argininosuccinate synthase"/>
    <property type="match status" value="1"/>
</dbReference>
<dbReference type="Gene3D" id="1.10.287.400">
    <property type="match status" value="1"/>
</dbReference>
<dbReference type="Gene3D" id="3.90.1260.10">
    <property type="entry name" value="Argininosuccinate synthetase, chain A, domain 2"/>
    <property type="match status" value="1"/>
</dbReference>
<dbReference type="Gene3D" id="3.40.50.620">
    <property type="entry name" value="HUPs"/>
    <property type="match status" value="1"/>
</dbReference>
<dbReference type="HAMAP" id="MF_00581">
    <property type="entry name" value="Arg_succ_synth_type2"/>
    <property type="match status" value="1"/>
</dbReference>
<dbReference type="InterPro" id="IPR023437">
    <property type="entry name" value="Arg_succ_synth_type2_subfam"/>
</dbReference>
<dbReference type="InterPro" id="IPR048268">
    <property type="entry name" value="Arginosuc_syn_C"/>
</dbReference>
<dbReference type="InterPro" id="IPR048267">
    <property type="entry name" value="Arginosuc_syn_N"/>
</dbReference>
<dbReference type="InterPro" id="IPR001518">
    <property type="entry name" value="Arginosuc_synth"/>
</dbReference>
<dbReference type="InterPro" id="IPR018223">
    <property type="entry name" value="Arginosuc_synth_CS"/>
</dbReference>
<dbReference type="InterPro" id="IPR023434">
    <property type="entry name" value="Arginosuc_synth_type_1_subfam"/>
</dbReference>
<dbReference type="InterPro" id="IPR024074">
    <property type="entry name" value="AS_cat/multimer_dom_body"/>
</dbReference>
<dbReference type="InterPro" id="IPR024073">
    <property type="entry name" value="AS_multimer_C_tail"/>
</dbReference>
<dbReference type="InterPro" id="IPR014729">
    <property type="entry name" value="Rossmann-like_a/b/a_fold"/>
</dbReference>
<dbReference type="NCBIfam" id="TIGR00032">
    <property type="entry name" value="argG"/>
    <property type="match status" value="1"/>
</dbReference>
<dbReference type="NCBIfam" id="NF003779">
    <property type="entry name" value="PRK05370.1"/>
    <property type="match status" value="1"/>
</dbReference>
<dbReference type="PANTHER" id="PTHR11587">
    <property type="entry name" value="ARGININOSUCCINATE SYNTHASE"/>
    <property type="match status" value="1"/>
</dbReference>
<dbReference type="PANTHER" id="PTHR11587:SF2">
    <property type="entry name" value="ARGININOSUCCINATE SYNTHASE"/>
    <property type="match status" value="1"/>
</dbReference>
<dbReference type="Pfam" id="PF20979">
    <property type="entry name" value="Arginosuc_syn_C"/>
    <property type="match status" value="1"/>
</dbReference>
<dbReference type="Pfam" id="PF00764">
    <property type="entry name" value="Arginosuc_synth"/>
    <property type="match status" value="1"/>
</dbReference>
<dbReference type="SUPFAM" id="SSF52402">
    <property type="entry name" value="Adenine nucleotide alpha hydrolases-like"/>
    <property type="match status" value="1"/>
</dbReference>
<dbReference type="SUPFAM" id="SSF69864">
    <property type="entry name" value="Argininosuccinate synthetase, C-terminal domain"/>
    <property type="match status" value="1"/>
</dbReference>
<dbReference type="PROSITE" id="PS00564">
    <property type="entry name" value="ARGININOSUCCIN_SYN_1"/>
    <property type="match status" value="1"/>
</dbReference>
<dbReference type="PROSITE" id="PS00565">
    <property type="entry name" value="ARGININOSUCCIN_SYN_2"/>
    <property type="match status" value="1"/>
</dbReference>